<reference key="1">
    <citation type="journal article" date="2002" name="J. Bacteriol.">
        <title>Whole-genome comparison of Mycobacterium tuberculosis clinical and laboratory strains.</title>
        <authorList>
            <person name="Fleischmann R.D."/>
            <person name="Alland D."/>
            <person name="Eisen J.A."/>
            <person name="Carpenter L."/>
            <person name="White O."/>
            <person name="Peterson J.D."/>
            <person name="DeBoy R.T."/>
            <person name="Dodson R.J."/>
            <person name="Gwinn M.L."/>
            <person name="Haft D.H."/>
            <person name="Hickey E.K."/>
            <person name="Kolonay J.F."/>
            <person name="Nelson W.C."/>
            <person name="Umayam L.A."/>
            <person name="Ermolaeva M.D."/>
            <person name="Salzberg S.L."/>
            <person name="Delcher A."/>
            <person name="Utterback T.R."/>
            <person name="Weidman J.F."/>
            <person name="Khouri H.M."/>
            <person name="Gill J."/>
            <person name="Mikula A."/>
            <person name="Bishai W."/>
            <person name="Jacobs W.R. Jr."/>
            <person name="Venter J.C."/>
            <person name="Fraser C.M."/>
        </authorList>
    </citation>
    <scope>NUCLEOTIDE SEQUENCE [LARGE SCALE GENOMIC DNA]</scope>
    <source>
        <strain>CDC 1551 / Oshkosh</strain>
    </source>
</reference>
<dbReference type="EC" id="3.5.1.4"/>
<dbReference type="EMBL" id="AE000516">
    <property type="protein sequence ID" value="AAK46726.1"/>
    <property type="molecule type" value="Genomic_DNA"/>
</dbReference>
<dbReference type="PIR" id="B70586">
    <property type="entry name" value="B70586"/>
</dbReference>
<dbReference type="RefSeq" id="WP_003412223.1">
    <property type="nucleotide sequence ID" value="NZ_KK341227.1"/>
</dbReference>
<dbReference type="SMR" id="P9WQ98"/>
<dbReference type="KEGG" id="mtc:MT2432"/>
<dbReference type="PATRIC" id="fig|83331.31.peg.2620"/>
<dbReference type="HOGENOM" id="CLU_009600_0_4_11"/>
<dbReference type="Proteomes" id="UP000001020">
    <property type="component" value="Chromosome"/>
</dbReference>
<dbReference type="GO" id="GO:0004040">
    <property type="term" value="F:amidase activity"/>
    <property type="evidence" value="ECO:0007669"/>
    <property type="project" value="UniProtKB-EC"/>
</dbReference>
<dbReference type="Gene3D" id="3.90.1300.10">
    <property type="entry name" value="Amidase signature (AS) domain"/>
    <property type="match status" value="1"/>
</dbReference>
<dbReference type="InterPro" id="IPR000120">
    <property type="entry name" value="Amidase"/>
</dbReference>
<dbReference type="InterPro" id="IPR020556">
    <property type="entry name" value="Amidase_CS"/>
</dbReference>
<dbReference type="InterPro" id="IPR023631">
    <property type="entry name" value="Amidase_dom"/>
</dbReference>
<dbReference type="InterPro" id="IPR036928">
    <property type="entry name" value="AS_sf"/>
</dbReference>
<dbReference type="NCBIfam" id="NF004717">
    <property type="entry name" value="PRK06061.1"/>
    <property type="match status" value="1"/>
</dbReference>
<dbReference type="PANTHER" id="PTHR11895:SF7">
    <property type="entry name" value="GLUTAMYL-TRNA(GLN) AMIDOTRANSFERASE SUBUNIT A, MITOCHONDRIAL"/>
    <property type="match status" value="1"/>
</dbReference>
<dbReference type="PANTHER" id="PTHR11895">
    <property type="entry name" value="TRANSAMIDASE"/>
    <property type="match status" value="1"/>
</dbReference>
<dbReference type="Pfam" id="PF01425">
    <property type="entry name" value="Amidase"/>
    <property type="match status" value="1"/>
</dbReference>
<dbReference type="SUPFAM" id="SSF75304">
    <property type="entry name" value="Amidase signature (AS) enzymes"/>
    <property type="match status" value="1"/>
</dbReference>
<dbReference type="PROSITE" id="PS00571">
    <property type="entry name" value="AMIDASES"/>
    <property type="match status" value="1"/>
</dbReference>
<accession>P9WQ98</accession>
<accession>L0TCA9</accession>
<accession>O05835</accession>
<accession>P63490</accession>
<name>AMIA2_MYCTO</name>
<sequence length="484" mass="50884">MVGASGSDAGAISGSGNQRLPTLTDLLYQLATRAVTSEELVRRSLRAIDVSQPTLNAFRVVLTESALADAAAADKRRAAGDTAPLLGIPIAVKDDVDVAGVPTAFGTQGYVAPATDDCEVVRRLKAAGAVIVGKTNTCELGQWPFTSGPGFGHTRNPWSRRHTPGGSSGGSAAAVAAGLVTAAIGSDGAGSIRIPAAWTHLVGIKPQRGRISTWPLPEAFNGVTVNGVLARTVEDAALVLDAASGNVEGDRHQPPPVTVSDFVGIAPGPLKIALSTHFPYTGFRAKLHPEILAATQRVGDQLELLGHTVVKGNPDYGLRLSWNFLARSTAGLWEWAERLGDEVTLDRRTVSNLRMGHVLSQAILRSARRHEAADQRRVGSIFDIVDVVLAPTTAQPPPMARAFDRLGSFGTDRAIIAACPSTWPWNLLGWPSINVPAGFTSDGLPIGVQLMGPANSEGMLISLAAELEAVSGWATKQPQVWWTS</sequence>
<comment type="catalytic activity">
    <reaction>
        <text>a monocarboxylic acid amide + H2O = a monocarboxylate + NH4(+)</text>
        <dbReference type="Rhea" id="RHEA:12020"/>
        <dbReference type="ChEBI" id="CHEBI:15377"/>
        <dbReference type="ChEBI" id="CHEBI:28938"/>
        <dbReference type="ChEBI" id="CHEBI:35757"/>
        <dbReference type="ChEBI" id="CHEBI:83628"/>
        <dbReference type="EC" id="3.5.1.4"/>
    </reaction>
</comment>
<comment type="similarity">
    <text evidence="2">Belongs to the amidase family.</text>
</comment>
<feature type="chain" id="PRO_0000426813" description="Putative amidase AmiA2">
    <location>
        <begin position="1"/>
        <end position="484"/>
    </location>
</feature>
<feature type="active site" description="Charge relay system" evidence="1">
    <location>
        <position position="93"/>
    </location>
</feature>
<feature type="active site" description="Charge relay system" evidence="1">
    <location>
        <position position="167"/>
    </location>
</feature>
<feature type="active site" description="Acyl-ester intermediate" evidence="1">
    <location>
        <position position="191"/>
    </location>
</feature>
<gene>
    <name type="primary">amiA2</name>
    <name type="ordered locus">MT2432</name>
</gene>
<protein>
    <recommendedName>
        <fullName>Putative amidase AmiA2</fullName>
        <ecNumber>3.5.1.4</ecNumber>
    </recommendedName>
</protein>
<evidence type="ECO:0000250" key="1"/>
<evidence type="ECO:0000305" key="2"/>
<proteinExistence type="inferred from homology"/>
<organism>
    <name type="scientific">Mycobacterium tuberculosis (strain CDC 1551 / Oshkosh)</name>
    <dbReference type="NCBI Taxonomy" id="83331"/>
    <lineage>
        <taxon>Bacteria</taxon>
        <taxon>Bacillati</taxon>
        <taxon>Actinomycetota</taxon>
        <taxon>Actinomycetes</taxon>
        <taxon>Mycobacteriales</taxon>
        <taxon>Mycobacteriaceae</taxon>
        <taxon>Mycobacterium</taxon>
        <taxon>Mycobacterium tuberculosis complex</taxon>
    </lineage>
</organism>
<keyword id="KW-0378">Hydrolase</keyword>
<keyword id="KW-1185">Reference proteome</keyword>